<comment type="function">
    <text evidence="1">May act as a negative regulator of salt tolerance.</text>
</comment>
<comment type="subcellular location">
    <subcellularLocation>
        <location evidence="1">Cytoplasm</location>
    </subcellularLocation>
</comment>
<comment type="similarity">
    <text evidence="4">Belongs to the NST1 family.</text>
</comment>
<sequence>MVPAPHTQHSPSSTMLNSSSTTAHAAPSTNGDVHAPKDHHLSSPSDTVSAPVNRKKQKRRQKQAARLAERQLANGHVSTDDTTQNGSSHANPERYHSDDGGADGPDHEQPTNGDVYDKDGQDSMDAHVDSQNPQGPNGTESSQKSTGRKSKKKKGKKARNNSHAQGDETSTPMSTPSVSMSHPLPPPLPSHLASHNILKPAKNRSIWNTSTQEERENIKTFWLELGEEERRQLVKVEKDAVLKKMKEQQRHSCSCTVCGRKRTAIEEELEVLYDAYYEELEQYANHNQGSFEKGSPMVPPPRLYQPPLRSPGQHTRTQGQFHPSRGRIHELTEEDDDLEEDYDEEEDDGDEPYSDEELDEEDEETRAARADFFAFGNSLTVKVADDLLKNDGKHFIDMMEQLAERRMQREEDTQYGIAAAHESLHSGHNHGPFDDEDYDDEEDEDYDSQEEEDYEEDEMDAMTEEQRMEEGRRMFQIFAARMFEQRVLTAYREKVAEQRQQKLIEELMEEETRNEQRNAKKAREAQKRKDKKRLQKQAKEEERARREAEKAAEEAAAKAEQEKKLEEQRKKREEQRKKKEAERKAQEEERARKEAEKLRRQREERERQAEAERKQREEKKRREEARRKEKEERELREKKAKEERDRKAQEEQAKKDTAKGGEEAKDQEKRDDQAKRSSQQGPVPIPSNLHHLQGFSPAVAHSPHVPSATPVLPKAPTPARPRQPSQQDSHSSSPHSQAPSTDPSQASLSPRSMPVSQSSGVASGNSQQGHGLHAMLHQPQPSTPLSPLGRSIPPGFSSVNGIPPNPPGLSGMVARPPVGHDLPSYPPHSGPFISPFRGYPAPSGIPAPPGINGARPMPPGRGFPLEPGQGFAFHGQQIPGAFSTPQGGLPHRHSRQPSGSLERSPLENHAQPMPISRPSPIKRPSSTQQDQQKGGDRTTQRDVDDLSAHLGSSALLDDTDVPLSSTLSQSLPGATAPGTFPGPARASFGGPSLFPDPLSASKHANFAVSPAVSGGTWGAQIPFGTSAFPSAQTWGTGHASGWSNNAFGSGGHHRAHTSRPVAIRLLVIQACKQLNTMSPFKGADGYHDVNLVLRQVEQLRPQNEPSISLKEMLDICDTEGNTQNGGGTFSIKKDETREFVKFEPDNNSAASGHRGSIVPGEIGSPVPSSSLPAFGGIGTPSVLRQYSSPPMGF</sequence>
<proteinExistence type="inferred from homology"/>
<organism>
    <name type="scientific">Neosartorya fischeri (strain ATCC 1020 / DSM 3700 / CBS 544.65 / FGSC A1164 / JCM 1740 / NRRL 181 / WB 181)</name>
    <name type="common">Aspergillus fischerianus</name>
    <dbReference type="NCBI Taxonomy" id="331117"/>
    <lineage>
        <taxon>Eukaryota</taxon>
        <taxon>Fungi</taxon>
        <taxon>Dikarya</taxon>
        <taxon>Ascomycota</taxon>
        <taxon>Pezizomycotina</taxon>
        <taxon>Eurotiomycetes</taxon>
        <taxon>Eurotiomycetidae</taxon>
        <taxon>Eurotiales</taxon>
        <taxon>Aspergillaceae</taxon>
        <taxon>Aspergillus</taxon>
        <taxon>Aspergillus subgen. Fumigati</taxon>
    </lineage>
</organism>
<gene>
    <name type="primary">nst1</name>
    <name type="ORF">NFIA_066920</name>
</gene>
<protein>
    <recommendedName>
        <fullName>Stress response protein nst1</fullName>
    </recommendedName>
</protein>
<keyword id="KW-0175">Coiled coil</keyword>
<keyword id="KW-0963">Cytoplasm</keyword>
<keyword id="KW-1185">Reference proteome</keyword>
<keyword id="KW-0346">Stress response</keyword>
<feature type="chain" id="PRO_0000324454" description="Stress response protein nst1">
    <location>
        <begin position="1"/>
        <end position="1193"/>
    </location>
</feature>
<feature type="region of interest" description="Disordered" evidence="3">
    <location>
        <begin position="1"/>
        <end position="197"/>
    </location>
</feature>
<feature type="region of interest" description="Disordered" evidence="3">
    <location>
        <begin position="288"/>
        <end position="368"/>
    </location>
</feature>
<feature type="region of interest" description="Disordered" evidence="3">
    <location>
        <begin position="422"/>
        <end position="468"/>
    </location>
</feature>
<feature type="region of interest" description="Disordered" evidence="3">
    <location>
        <begin position="508"/>
        <end position="815"/>
    </location>
</feature>
<feature type="region of interest" description="Disordered" evidence="3">
    <location>
        <begin position="857"/>
        <end position="942"/>
    </location>
</feature>
<feature type="region of interest" description="Disordered" evidence="3">
    <location>
        <begin position="966"/>
        <end position="988"/>
    </location>
</feature>
<feature type="region of interest" description="Disordered" evidence="3">
    <location>
        <begin position="1145"/>
        <end position="1193"/>
    </location>
</feature>
<feature type="coiled-coil region" evidence="2">
    <location>
        <begin position="448"/>
        <end position="659"/>
    </location>
</feature>
<feature type="compositionally biased region" description="Low complexity" evidence="3">
    <location>
        <begin position="10"/>
        <end position="29"/>
    </location>
</feature>
<feature type="compositionally biased region" description="Basic residues" evidence="3">
    <location>
        <begin position="53"/>
        <end position="63"/>
    </location>
</feature>
<feature type="compositionally biased region" description="Low complexity" evidence="3">
    <location>
        <begin position="64"/>
        <end position="73"/>
    </location>
</feature>
<feature type="compositionally biased region" description="Polar residues" evidence="3">
    <location>
        <begin position="76"/>
        <end position="90"/>
    </location>
</feature>
<feature type="compositionally biased region" description="Basic and acidic residues" evidence="3">
    <location>
        <begin position="91"/>
        <end position="128"/>
    </location>
</feature>
<feature type="compositionally biased region" description="Polar residues" evidence="3">
    <location>
        <begin position="129"/>
        <end position="140"/>
    </location>
</feature>
<feature type="compositionally biased region" description="Basic residues" evidence="3">
    <location>
        <begin position="146"/>
        <end position="160"/>
    </location>
</feature>
<feature type="compositionally biased region" description="Low complexity" evidence="3">
    <location>
        <begin position="169"/>
        <end position="182"/>
    </location>
</feature>
<feature type="compositionally biased region" description="Polar residues" evidence="3">
    <location>
        <begin position="312"/>
        <end position="321"/>
    </location>
</feature>
<feature type="compositionally biased region" description="Acidic residues" evidence="3">
    <location>
        <begin position="332"/>
        <end position="364"/>
    </location>
</feature>
<feature type="compositionally biased region" description="Acidic residues" evidence="3">
    <location>
        <begin position="434"/>
        <end position="463"/>
    </location>
</feature>
<feature type="compositionally biased region" description="Basic and acidic residues" evidence="3">
    <location>
        <begin position="508"/>
        <end position="527"/>
    </location>
</feature>
<feature type="compositionally biased region" description="Basic and acidic residues" evidence="3">
    <location>
        <begin position="537"/>
        <end position="675"/>
    </location>
</feature>
<feature type="compositionally biased region" description="Low complexity" evidence="3">
    <location>
        <begin position="722"/>
        <end position="740"/>
    </location>
</feature>
<feature type="compositionally biased region" description="Polar residues" evidence="3">
    <location>
        <begin position="741"/>
        <end position="769"/>
    </location>
</feature>
<feature type="compositionally biased region" description="Low complexity" evidence="3">
    <location>
        <begin position="914"/>
        <end position="926"/>
    </location>
</feature>
<feature type="compositionally biased region" description="Basic and acidic residues" evidence="3">
    <location>
        <begin position="933"/>
        <end position="942"/>
    </location>
</feature>
<feature type="compositionally biased region" description="Low complexity" evidence="3">
    <location>
        <begin position="972"/>
        <end position="986"/>
    </location>
</feature>
<feature type="compositionally biased region" description="Polar residues" evidence="3">
    <location>
        <begin position="1182"/>
        <end position="1193"/>
    </location>
</feature>
<accession>A1D731</accession>
<dbReference type="EMBL" id="DS027690">
    <property type="protein sequence ID" value="EAW21525.1"/>
    <property type="molecule type" value="Genomic_DNA"/>
</dbReference>
<dbReference type="RefSeq" id="XP_001263422.1">
    <property type="nucleotide sequence ID" value="XM_001263421.1"/>
</dbReference>
<dbReference type="SMR" id="A1D731"/>
<dbReference type="STRING" id="331117.A1D731"/>
<dbReference type="EnsemblFungi" id="EAW21525">
    <property type="protein sequence ID" value="EAW21525"/>
    <property type="gene ID" value="NFIA_066920"/>
</dbReference>
<dbReference type="GeneID" id="4590039"/>
<dbReference type="KEGG" id="nfi:NFIA_066920"/>
<dbReference type="VEuPathDB" id="FungiDB:NFIA_066920"/>
<dbReference type="eggNOG" id="ENOG502QSSK">
    <property type="taxonomic scope" value="Eukaryota"/>
</dbReference>
<dbReference type="HOGENOM" id="CLU_002935_0_0_1"/>
<dbReference type="OMA" id="EEDTQYG"/>
<dbReference type="OrthoDB" id="21629at2759"/>
<dbReference type="Proteomes" id="UP000006702">
    <property type="component" value="Unassembled WGS sequence"/>
</dbReference>
<dbReference type="GO" id="GO:0005737">
    <property type="term" value="C:cytoplasm"/>
    <property type="evidence" value="ECO:0007669"/>
    <property type="project" value="UniProtKB-SubCell"/>
</dbReference>
<dbReference type="InterPro" id="IPR051195">
    <property type="entry name" value="Fungal_stress_NST1"/>
</dbReference>
<dbReference type="InterPro" id="IPR025279">
    <property type="entry name" value="NST1"/>
</dbReference>
<dbReference type="PANTHER" id="PTHR31780:SF10">
    <property type="entry name" value="LD36051P"/>
    <property type="match status" value="1"/>
</dbReference>
<dbReference type="PANTHER" id="PTHR31780">
    <property type="entry name" value="STRESS RESPONSE PROTEIN NST1-RELATED"/>
    <property type="match status" value="1"/>
</dbReference>
<dbReference type="Pfam" id="PF13945">
    <property type="entry name" value="NST1"/>
    <property type="match status" value="1"/>
</dbReference>
<evidence type="ECO:0000250" key="1"/>
<evidence type="ECO:0000255" key="2"/>
<evidence type="ECO:0000256" key="3">
    <source>
        <dbReference type="SAM" id="MobiDB-lite"/>
    </source>
</evidence>
<evidence type="ECO:0000305" key="4"/>
<reference key="1">
    <citation type="journal article" date="2008" name="PLoS Genet.">
        <title>Genomic islands in the pathogenic filamentous fungus Aspergillus fumigatus.</title>
        <authorList>
            <person name="Fedorova N.D."/>
            <person name="Khaldi N."/>
            <person name="Joardar V.S."/>
            <person name="Maiti R."/>
            <person name="Amedeo P."/>
            <person name="Anderson M.J."/>
            <person name="Crabtree J."/>
            <person name="Silva J.C."/>
            <person name="Badger J.H."/>
            <person name="Albarraq A."/>
            <person name="Angiuoli S."/>
            <person name="Bussey H."/>
            <person name="Bowyer P."/>
            <person name="Cotty P.J."/>
            <person name="Dyer P.S."/>
            <person name="Egan A."/>
            <person name="Galens K."/>
            <person name="Fraser-Liggett C.M."/>
            <person name="Haas B.J."/>
            <person name="Inman J.M."/>
            <person name="Kent R."/>
            <person name="Lemieux S."/>
            <person name="Malavazi I."/>
            <person name="Orvis J."/>
            <person name="Roemer T."/>
            <person name="Ronning C.M."/>
            <person name="Sundaram J.P."/>
            <person name="Sutton G."/>
            <person name="Turner G."/>
            <person name="Venter J.C."/>
            <person name="White O.R."/>
            <person name="Whitty B.R."/>
            <person name="Youngman P."/>
            <person name="Wolfe K.H."/>
            <person name="Goldman G.H."/>
            <person name="Wortman J.R."/>
            <person name="Jiang B."/>
            <person name="Denning D.W."/>
            <person name="Nierman W.C."/>
        </authorList>
    </citation>
    <scope>NUCLEOTIDE SEQUENCE [LARGE SCALE GENOMIC DNA]</scope>
    <source>
        <strain>ATCC 1020 / DSM 3700 / CBS 544.65 / FGSC A1164 / JCM 1740 / NRRL 181 / WB 181</strain>
    </source>
</reference>
<name>NST1_NEOFI</name>